<name>ARND_SALCH</name>
<reference key="1">
    <citation type="journal article" date="2005" name="Nucleic Acids Res.">
        <title>The genome sequence of Salmonella enterica serovar Choleraesuis, a highly invasive and resistant zoonotic pathogen.</title>
        <authorList>
            <person name="Chiu C.-H."/>
            <person name="Tang P."/>
            <person name="Chu C."/>
            <person name="Hu S."/>
            <person name="Bao Q."/>
            <person name="Yu J."/>
            <person name="Chou Y.-Y."/>
            <person name="Wang H.-S."/>
            <person name="Lee Y.-S."/>
        </authorList>
    </citation>
    <scope>NUCLEOTIDE SEQUENCE [LARGE SCALE GENOMIC DNA]</scope>
    <source>
        <strain>SC-B67</strain>
    </source>
</reference>
<dbReference type="EC" id="3.5.1.n3" evidence="1"/>
<dbReference type="EMBL" id="AE017220">
    <property type="protein sequence ID" value="AAX66207.1"/>
    <property type="molecule type" value="Genomic_DNA"/>
</dbReference>
<dbReference type="RefSeq" id="WP_001540502.1">
    <property type="nucleotide sequence ID" value="NC_006905.1"/>
</dbReference>
<dbReference type="SMR" id="Q57M55"/>
<dbReference type="KEGG" id="sec:SCH_2301"/>
<dbReference type="HOGENOM" id="CLU_084199_0_0_6"/>
<dbReference type="UniPathway" id="UPA00030"/>
<dbReference type="UniPathway" id="UPA00036">
    <property type="reaction ID" value="UER00496"/>
</dbReference>
<dbReference type="Proteomes" id="UP000000538">
    <property type="component" value="Chromosome"/>
</dbReference>
<dbReference type="GO" id="GO:0016020">
    <property type="term" value="C:membrane"/>
    <property type="evidence" value="ECO:0007669"/>
    <property type="project" value="GOC"/>
</dbReference>
<dbReference type="GO" id="GO:0016811">
    <property type="term" value="F:hydrolase activity, acting on carbon-nitrogen (but not peptide) bonds, in linear amides"/>
    <property type="evidence" value="ECO:0007669"/>
    <property type="project" value="UniProtKB-UniRule"/>
</dbReference>
<dbReference type="GO" id="GO:0036108">
    <property type="term" value="P:4-amino-4-deoxy-alpha-L-arabinopyranosyl undecaprenyl phosphate biosynthetic process"/>
    <property type="evidence" value="ECO:0007669"/>
    <property type="project" value="UniProtKB-UniRule"/>
</dbReference>
<dbReference type="GO" id="GO:0009245">
    <property type="term" value="P:lipid A biosynthetic process"/>
    <property type="evidence" value="ECO:0007669"/>
    <property type="project" value="UniProtKB-UniRule"/>
</dbReference>
<dbReference type="GO" id="GO:0009103">
    <property type="term" value="P:lipopolysaccharide biosynthetic process"/>
    <property type="evidence" value="ECO:0007669"/>
    <property type="project" value="UniProtKB-UniRule"/>
</dbReference>
<dbReference type="GO" id="GO:0046677">
    <property type="term" value="P:response to antibiotic"/>
    <property type="evidence" value="ECO:0007669"/>
    <property type="project" value="UniProtKB-KW"/>
</dbReference>
<dbReference type="Gene3D" id="3.20.20.370">
    <property type="entry name" value="Glycoside hydrolase/deacetylase"/>
    <property type="match status" value="1"/>
</dbReference>
<dbReference type="HAMAP" id="MF_01870">
    <property type="entry name" value="ArnD"/>
    <property type="match status" value="1"/>
</dbReference>
<dbReference type="InterPro" id="IPR023557">
    <property type="entry name" value="ArnD"/>
</dbReference>
<dbReference type="InterPro" id="IPR011330">
    <property type="entry name" value="Glyco_hydro/deAcase_b/a-brl"/>
</dbReference>
<dbReference type="InterPro" id="IPR002509">
    <property type="entry name" value="NODB_dom"/>
</dbReference>
<dbReference type="InterPro" id="IPR050248">
    <property type="entry name" value="Polysacc_deacetylase_ArnD"/>
</dbReference>
<dbReference type="NCBIfam" id="NF011923">
    <property type="entry name" value="PRK15394.1"/>
    <property type="match status" value="1"/>
</dbReference>
<dbReference type="PANTHER" id="PTHR10587:SF137">
    <property type="entry name" value="4-DEOXY-4-FORMAMIDO-L-ARABINOSE-PHOSPHOUNDECAPRENOL DEFORMYLASE ARND-RELATED"/>
    <property type="match status" value="1"/>
</dbReference>
<dbReference type="PANTHER" id="PTHR10587">
    <property type="entry name" value="GLYCOSYL TRANSFERASE-RELATED"/>
    <property type="match status" value="1"/>
</dbReference>
<dbReference type="Pfam" id="PF01522">
    <property type="entry name" value="Polysacc_deac_1"/>
    <property type="match status" value="1"/>
</dbReference>
<dbReference type="SUPFAM" id="SSF88713">
    <property type="entry name" value="Glycoside hydrolase/deacetylase"/>
    <property type="match status" value="1"/>
</dbReference>
<dbReference type="PROSITE" id="PS51677">
    <property type="entry name" value="NODB"/>
    <property type="match status" value="1"/>
</dbReference>
<protein>
    <recommendedName>
        <fullName evidence="1">Probable 4-deoxy-4-formamido-L-arabinose-phosphoundecaprenol deformylase ArnD</fullName>
        <ecNumber evidence="1">3.5.1.n3</ecNumber>
    </recommendedName>
</protein>
<feature type="chain" id="PRO_0000383528" description="Probable 4-deoxy-4-formamido-L-arabinose-phosphoundecaprenol deformylase ArnD">
    <location>
        <begin position="1"/>
        <end position="299"/>
    </location>
</feature>
<feature type="domain" description="NodB homology" evidence="1">
    <location>
        <begin position="2"/>
        <end position="260"/>
    </location>
</feature>
<organism>
    <name type="scientific">Salmonella choleraesuis (strain SC-B67)</name>
    <dbReference type="NCBI Taxonomy" id="321314"/>
    <lineage>
        <taxon>Bacteria</taxon>
        <taxon>Pseudomonadati</taxon>
        <taxon>Pseudomonadota</taxon>
        <taxon>Gammaproteobacteria</taxon>
        <taxon>Enterobacterales</taxon>
        <taxon>Enterobacteriaceae</taxon>
        <taxon>Salmonella</taxon>
    </lineage>
</organism>
<accession>Q57M55</accession>
<gene>
    <name evidence="1" type="primary">arnD</name>
    <name type="ordered locus">SCH_2301</name>
</gene>
<evidence type="ECO:0000255" key="1">
    <source>
        <dbReference type="HAMAP-Rule" id="MF_01870"/>
    </source>
</evidence>
<proteinExistence type="inferred from homology"/>
<comment type="function">
    <text evidence="1">Catalyzes the deformylation of 4-deoxy-4-formamido-L-arabinose-phosphoundecaprenol to 4-amino-4-deoxy-L-arabinose-phosphoundecaprenol. The modified arabinose is attached to lipid A and is required for resistance to polymyxin and cationic antimicrobial peptides.</text>
</comment>
<comment type="catalytic activity">
    <reaction evidence="1">
        <text>4-deoxy-4-formamido-alpha-L-arabinopyranosyl di-trans,octa-cis-undecaprenyl phosphate + H2O = 4-amino-4-deoxy-alpha-L-arabinopyranosyl di-trans,octa-cis-undecaprenyl phosphate + formate</text>
        <dbReference type="Rhea" id="RHEA:27734"/>
        <dbReference type="ChEBI" id="CHEBI:15377"/>
        <dbReference type="ChEBI" id="CHEBI:15740"/>
        <dbReference type="ChEBI" id="CHEBI:58909"/>
        <dbReference type="ChEBI" id="CHEBI:60463"/>
        <dbReference type="EC" id="3.5.1.n3"/>
    </reaction>
</comment>
<comment type="pathway">
    <text evidence="1">Glycolipid biosynthesis; 4-amino-4-deoxy-alpha-L-arabinose undecaprenyl phosphate biosynthesis; 4-amino-4-deoxy-alpha-L-arabinose undecaprenyl phosphate from UDP-4-deoxy-4-formamido-beta-L-arabinose and undecaprenyl phosphate: step 2/2.</text>
</comment>
<comment type="pathway">
    <text evidence="1">Bacterial outer membrane biogenesis; lipopolysaccharide biosynthesis.</text>
</comment>
<comment type="similarity">
    <text evidence="1">Belongs to the polysaccharide deacetylase family. ArnD deformylase subfamily.</text>
</comment>
<sequence length="299" mass="33037">MTKVGLRIDVDTLRGTREGVPRLLATLHRHGVQASFFFSVGPDNMGRHLWRLIRPRFLWKMLRSNAASLYGWDILLAGTAWPGKNIGNANAGIIRETATYHETGLHAWDHHAWQTHSGHWSIRQLKEDIARGITALEAIIGKPVTCSAAAGWRADGRVVRAKESFNLRYNSDCRGTTLFRPLLMPGQTGTPQIPVTLPTWDEVIGPAVQAQSFNTWIISRMLQDKGTPVYTIHAEVEGIVHQPLFEDLLVRARDAGITFCPLGELLPASPESLPLGQIVRGHIPGREGWLGCQQAASAS</sequence>
<keyword id="KW-0046">Antibiotic resistance</keyword>
<keyword id="KW-0378">Hydrolase</keyword>
<keyword id="KW-0441">Lipid A biosynthesis</keyword>
<keyword id="KW-0444">Lipid biosynthesis</keyword>
<keyword id="KW-0443">Lipid metabolism</keyword>
<keyword id="KW-0448">Lipopolysaccharide biosynthesis</keyword>